<comment type="function">
    <text evidence="1">One of the essential components for the initiation of protein synthesis. Stabilizes the binding of IF-2 and IF-3 on the 30S subunit to which N-formylmethionyl-tRNA(fMet) subsequently binds. Helps modulate mRNA selection, yielding the 30S pre-initiation complex (PIC). Upon addition of the 50S ribosomal subunit IF-1, IF-2 and IF-3 are released leaving the mature 70S translation initiation complex.</text>
</comment>
<comment type="subunit">
    <text evidence="1">Component of the 30S ribosomal translation pre-initiation complex which assembles on the 30S ribosome in the order IF-2 and IF-3, IF-1 and N-formylmethionyl-tRNA(fMet); mRNA recruitment can occur at any time during PIC assembly.</text>
</comment>
<comment type="subcellular location">
    <subcellularLocation>
        <location evidence="1">Cytoplasm</location>
    </subcellularLocation>
</comment>
<comment type="similarity">
    <text evidence="1">Belongs to the IF-1 family.</text>
</comment>
<organism>
    <name type="scientific">Listeria welshimeri serovar 6b (strain ATCC 35897 / DSM 20650 / CCUG 15529 / CIP 8149 / NCTC 11857 / SLCC 5334 / V8)</name>
    <dbReference type="NCBI Taxonomy" id="386043"/>
    <lineage>
        <taxon>Bacteria</taxon>
        <taxon>Bacillati</taxon>
        <taxon>Bacillota</taxon>
        <taxon>Bacilli</taxon>
        <taxon>Bacillales</taxon>
        <taxon>Listeriaceae</taxon>
        <taxon>Listeria</taxon>
    </lineage>
</organism>
<proteinExistence type="inferred from homology"/>
<gene>
    <name evidence="1" type="primary">infA</name>
    <name type="ordered locus">lwe2560</name>
</gene>
<sequence length="72" mass="8218">MAKEDVIEVEGVVQETLPNAMFNVELENGHKVLATVSGKIRMHYIRILPGDKVTVELSPYDLTRGRITYRFK</sequence>
<dbReference type="EMBL" id="AM263198">
    <property type="protein sequence ID" value="CAK21978.1"/>
    <property type="molecule type" value="Genomic_DNA"/>
</dbReference>
<dbReference type="RefSeq" id="WP_003720929.1">
    <property type="nucleotide sequence ID" value="NC_008555.1"/>
</dbReference>
<dbReference type="SMR" id="A0ALU6"/>
<dbReference type="STRING" id="386043.lwe2560"/>
<dbReference type="GeneID" id="93240491"/>
<dbReference type="KEGG" id="lwe:lwe2560"/>
<dbReference type="eggNOG" id="COG0361">
    <property type="taxonomic scope" value="Bacteria"/>
</dbReference>
<dbReference type="HOGENOM" id="CLU_151267_1_0_9"/>
<dbReference type="OrthoDB" id="9803250at2"/>
<dbReference type="Proteomes" id="UP000000779">
    <property type="component" value="Chromosome"/>
</dbReference>
<dbReference type="GO" id="GO:0005829">
    <property type="term" value="C:cytosol"/>
    <property type="evidence" value="ECO:0007669"/>
    <property type="project" value="TreeGrafter"/>
</dbReference>
<dbReference type="GO" id="GO:0043022">
    <property type="term" value="F:ribosome binding"/>
    <property type="evidence" value="ECO:0007669"/>
    <property type="project" value="UniProtKB-UniRule"/>
</dbReference>
<dbReference type="GO" id="GO:0019843">
    <property type="term" value="F:rRNA binding"/>
    <property type="evidence" value="ECO:0007669"/>
    <property type="project" value="UniProtKB-UniRule"/>
</dbReference>
<dbReference type="GO" id="GO:0003743">
    <property type="term" value="F:translation initiation factor activity"/>
    <property type="evidence" value="ECO:0007669"/>
    <property type="project" value="UniProtKB-UniRule"/>
</dbReference>
<dbReference type="CDD" id="cd04451">
    <property type="entry name" value="S1_IF1"/>
    <property type="match status" value="1"/>
</dbReference>
<dbReference type="FunFam" id="2.40.50.140:FF:000002">
    <property type="entry name" value="Translation initiation factor IF-1"/>
    <property type="match status" value="1"/>
</dbReference>
<dbReference type="Gene3D" id="2.40.50.140">
    <property type="entry name" value="Nucleic acid-binding proteins"/>
    <property type="match status" value="1"/>
</dbReference>
<dbReference type="HAMAP" id="MF_00075">
    <property type="entry name" value="IF_1"/>
    <property type="match status" value="1"/>
</dbReference>
<dbReference type="InterPro" id="IPR012340">
    <property type="entry name" value="NA-bd_OB-fold"/>
</dbReference>
<dbReference type="InterPro" id="IPR006196">
    <property type="entry name" value="RNA-binding_domain_S1_IF1"/>
</dbReference>
<dbReference type="InterPro" id="IPR003029">
    <property type="entry name" value="S1_domain"/>
</dbReference>
<dbReference type="InterPro" id="IPR004368">
    <property type="entry name" value="TIF_IF1"/>
</dbReference>
<dbReference type="NCBIfam" id="TIGR00008">
    <property type="entry name" value="infA"/>
    <property type="match status" value="1"/>
</dbReference>
<dbReference type="PANTHER" id="PTHR33370">
    <property type="entry name" value="TRANSLATION INITIATION FACTOR IF-1, CHLOROPLASTIC"/>
    <property type="match status" value="1"/>
</dbReference>
<dbReference type="PANTHER" id="PTHR33370:SF1">
    <property type="entry name" value="TRANSLATION INITIATION FACTOR IF-1, CHLOROPLASTIC"/>
    <property type="match status" value="1"/>
</dbReference>
<dbReference type="Pfam" id="PF01176">
    <property type="entry name" value="eIF-1a"/>
    <property type="match status" value="1"/>
</dbReference>
<dbReference type="SMART" id="SM00316">
    <property type="entry name" value="S1"/>
    <property type="match status" value="1"/>
</dbReference>
<dbReference type="SUPFAM" id="SSF50249">
    <property type="entry name" value="Nucleic acid-binding proteins"/>
    <property type="match status" value="1"/>
</dbReference>
<dbReference type="PROSITE" id="PS50832">
    <property type="entry name" value="S1_IF1_TYPE"/>
    <property type="match status" value="1"/>
</dbReference>
<name>IF1_LISW6</name>
<evidence type="ECO:0000255" key="1">
    <source>
        <dbReference type="HAMAP-Rule" id="MF_00075"/>
    </source>
</evidence>
<feature type="chain" id="PRO_0000338855" description="Translation initiation factor IF-1">
    <location>
        <begin position="1"/>
        <end position="72"/>
    </location>
</feature>
<feature type="domain" description="S1-like" evidence="1">
    <location>
        <begin position="1"/>
        <end position="72"/>
    </location>
</feature>
<accession>A0ALU6</accession>
<keyword id="KW-0963">Cytoplasm</keyword>
<keyword id="KW-0396">Initiation factor</keyword>
<keyword id="KW-0648">Protein biosynthesis</keyword>
<keyword id="KW-0694">RNA-binding</keyword>
<keyword id="KW-0699">rRNA-binding</keyword>
<protein>
    <recommendedName>
        <fullName evidence="1">Translation initiation factor IF-1</fullName>
    </recommendedName>
</protein>
<reference key="1">
    <citation type="journal article" date="2006" name="J. Bacteriol.">
        <title>Whole-genome sequence of Listeria welshimeri reveals common steps in genome reduction with Listeria innocua as compared to Listeria monocytogenes.</title>
        <authorList>
            <person name="Hain T."/>
            <person name="Steinweg C."/>
            <person name="Kuenne C.T."/>
            <person name="Billion A."/>
            <person name="Ghai R."/>
            <person name="Chatterjee S.S."/>
            <person name="Domann E."/>
            <person name="Kaerst U."/>
            <person name="Goesmann A."/>
            <person name="Bekel T."/>
            <person name="Bartels D."/>
            <person name="Kaiser O."/>
            <person name="Meyer F."/>
            <person name="Puehler A."/>
            <person name="Weisshaar B."/>
            <person name="Wehland J."/>
            <person name="Liang C."/>
            <person name="Dandekar T."/>
            <person name="Lampidis R."/>
            <person name="Kreft J."/>
            <person name="Goebel W."/>
            <person name="Chakraborty T."/>
        </authorList>
    </citation>
    <scope>NUCLEOTIDE SEQUENCE [LARGE SCALE GENOMIC DNA]</scope>
    <source>
        <strain>ATCC 35897 / DSM 20650 / CCUG 15529 / CIP 8149 / NCTC 11857 / SLCC 5334 / V8</strain>
    </source>
</reference>